<evidence type="ECO:0000250" key="1"/>
<evidence type="ECO:0000256" key="2">
    <source>
        <dbReference type="SAM" id="MobiDB-lite"/>
    </source>
</evidence>
<evidence type="ECO:0000305" key="3"/>
<reference key="1">
    <citation type="journal article" date="2001" name="DNA Res.">
        <title>Complete genomic sequence of the filamentous nitrogen-fixing cyanobacterium Anabaena sp. strain PCC 7120.</title>
        <authorList>
            <person name="Kaneko T."/>
            <person name="Nakamura Y."/>
            <person name="Wolk C.P."/>
            <person name="Kuritz T."/>
            <person name="Sasamoto S."/>
            <person name="Watanabe A."/>
            <person name="Iriguchi M."/>
            <person name="Ishikawa A."/>
            <person name="Kawashima K."/>
            <person name="Kimura T."/>
            <person name="Kishida Y."/>
            <person name="Kohara M."/>
            <person name="Matsumoto M."/>
            <person name="Matsuno A."/>
            <person name="Muraki A."/>
            <person name="Nakazaki N."/>
            <person name="Shimpo S."/>
            <person name="Sugimoto M."/>
            <person name="Takazawa M."/>
            <person name="Yamada M."/>
            <person name="Yasuda M."/>
            <person name="Tabata S."/>
        </authorList>
    </citation>
    <scope>NUCLEOTIDE SEQUENCE [LARGE SCALE GENOMIC DNA]</scope>
    <source>
        <strain>PCC 7120 / SAG 25.82 / UTEX 2576</strain>
    </source>
</reference>
<proteinExistence type="inferred from homology"/>
<dbReference type="EMBL" id="BA000019">
    <property type="protein sequence ID" value="BAB73441.1"/>
    <property type="molecule type" value="Genomic_DNA"/>
</dbReference>
<dbReference type="PIR" id="AH2023">
    <property type="entry name" value="AH2023"/>
</dbReference>
<dbReference type="SMR" id="Q8YW74"/>
<dbReference type="STRING" id="103690.gene:10493760"/>
<dbReference type="KEGG" id="ana:alr1742"/>
<dbReference type="eggNOG" id="COG0443">
    <property type="taxonomic scope" value="Bacteria"/>
</dbReference>
<dbReference type="OrthoDB" id="5410377at2"/>
<dbReference type="Proteomes" id="UP000002483">
    <property type="component" value="Chromosome"/>
</dbReference>
<dbReference type="GO" id="GO:0005524">
    <property type="term" value="F:ATP binding"/>
    <property type="evidence" value="ECO:0007669"/>
    <property type="project" value="UniProtKB-UniRule"/>
</dbReference>
<dbReference type="GO" id="GO:0140662">
    <property type="term" value="F:ATP-dependent protein folding chaperone"/>
    <property type="evidence" value="ECO:0007669"/>
    <property type="project" value="InterPro"/>
</dbReference>
<dbReference type="GO" id="GO:0051082">
    <property type="term" value="F:unfolded protein binding"/>
    <property type="evidence" value="ECO:0007669"/>
    <property type="project" value="InterPro"/>
</dbReference>
<dbReference type="CDD" id="cd10234">
    <property type="entry name" value="ASKHA_NBD_HSP70_DnaK-like"/>
    <property type="match status" value="1"/>
</dbReference>
<dbReference type="FunFam" id="2.60.34.10:FF:000014">
    <property type="entry name" value="Chaperone protein DnaK HSP70"/>
    <property type="match status" value="1"/>
</dbReference>
<dbReference type="FunFam" id="1.20.1270.10:FF:000001">
    <property type="entry name" value="Molecular chaperone DnaK"/>
    <property type="match status" value="1"/>
</dbReference>
<dbReference type="FunFam" id="3.30.420.40:FF:000004">
    <property type="entry name" value="Molecular chaperone DnaK"/>
    <property type="match status" value="1"/>
</dbReference>
<dbReference type="FunFam" id="3.90.640.10:FF:000003">
    <property type="entry name" value="Molecular chaperone DnaK"/>
    <property type="match status" value="1"/>
</dbReference>
<dbReference type="Gene3D" id="1.20.1270.10">
    <property type="match status" value="1"/>
</dbReference>
<dbReference type="Gene3D" id="3.30.420.40">
    <property type="match status" value="2"/>
</dbReference>
<dbReference type="Gene3D" id="3.90.640.10">
    <property type="entry name" value="Actin, Chain A, domain 4"/>
    <property type="match status" value="1"/>
</dbReference>
<dbReference type="Gene3D" id="2.60.34.10">
    <property type="entry name" value="Substrate Binding Domain Of DNAk, Chain A, domain 1"/>
    <property type="match status" value="1"/>
</dbReference>
<dbReference type="HAMAP" id="MF_00332">
    <property type="entry name" value="DnaK"/>
    <property type="match status" value="1"/>
</dbReference>
<dbReference type="InterPro" id="IPR043129">
    <property type="entry name" value="ATPase_NBD"/>
</dbReference>
<dbReference type="InterPro" id="IPR012725">
    <property type="entry name" value="Chaperone_DnaK"/>
</dbReference>
<dbReference type="InterPro" id="IPR018181">
    <property type="entry name" value="Heat_shock_70_CS"/>
</dbReference>
<dbReference type="InterPro" id="IPR029048">
    <property type="entry name" value="HSP70_C_sf"/>
</dbReference>
<dbReference type="InterPro" id="IPR029047">
    <property type="entry name" value="HSP70_peptide-bd_sf"/>
</dbReference>
<dbReference type="InterPro" id="IPR013126">
    <property type="entry name" value="Hsp_70_fam"/>
</dbReference>
<dbReference type="NCBIfam" id="NF001413">
    <property type="entry name" value="PRK00290.1"/>
    <property type="match status" value="1"/>
</dbReference>
<dbReference type="NCBIfam" id="NF003520">
    <property type="entry name" value="PRK05183.1"/>
    <property type="match status" value="1"/>
</dbReference>
<dbReference type="NCBIfam" id="TIGR02350">
    <property type="entry name" value="prok_dnaK"/>
    <property type="match status" value="1"/>
</dbReference>
<dbReference type="PANTHER" id="PTHR19375">
    <property type="entry name" value="HEAT SHOCK PROTEIN 70KDA"/>
    <property type="match status" value="1"/>
</dbReference>
<dbReference type="Pfam" id="PF00012">
    <property type="entry name" value="HSP70"/>
    <property type="match status" value="1"/>
</dbReference>
<dbReference type="PRINTS" id="PR00301">
    <property type="entry name" value="HEATSHOCK70"/>
</dbReference>
<dbReference type="SUPFAM" id="SSF53067">
    <property type="entry name" value="Actin-like ATPase domain"/>
    <property type="match status" value="2"/>
</dbReference>
<dbReference type="SUPFAM" id="SSF100934">
    <property type="entry name" value="Heat shock protein 70kD (HSP70), C-terminal subdomain"/>
    <property type="match status" value="1"/>
</dbReference>
<dbReference type="SUPFAM" id="SSF100920">
    <property type="entry name" value="Heat shock protein 70kD (HSP70), peptide-binding domain"/>
    <property type="match status" value="1"/>
</dbReference>
<dbReference type="PROSITE" id="PS00297">
    <property type="entry name" value="HSP70_1"/>
    <property type="match status" value="1"/>
</dbReference>
<dbReference type="PROSITE" id="PS00329">
    <property type="entry name" value="HSP70_2"/>
    <property type="match status" value="1"/>
</dbReference>
<dbReference type="PROSITE" id="PS01036">
    <property type="entry name" value="HSP70_3"/>
    <property type="match status" value="1"/>
</dbReference>
<accession>Q8YW74</accession>
<protein>
    <recommendedName>
        <fullName>Chaperone protein dnaK2</fullName>
    </recommendedName>
    <alternativeName>
        <fullName>HSP70-2</fullName>
    </alternativeName>
    <alternativeName>
        <fullName>Heat shock 70 kDa protein 2</fullName>
    </alternativeName>
    <alternativeName>
        <fullName>Heat shock protein 70-2</fullName>
    </alternativeName>
</protein>
<organism>
    <name type="scientific">Nostoc sp. (strain PCC 7120 / SAG 25.82 / UTEX 2576)</name>
    <dbReference type="NCBI Taxonomy" id="103690"/>
    <lineage>
        <taxon>Bacteria</taxon>
        <taxon>Bacillati</taxon>
        <taxon>Cyanobacteriota</taxon>
        <taxon>Cyanophyceae</taxon>
        <taxon>Nostocales</taxon>
        <taxon>Nostocaceae</taxon>
        <taxon>Nostoc</taxon>
    </lineage>
</organism>
<comment type="function">
    <text evidence="1">Acts as a chaperone.</text>
</comment>
<comment type="induction">
    <text evidence="1">By stress conditions e.g. heat shock (By similarity).</text>
</comment>
<comment type="similarity">
    <text evidence="3">Belongs to the heat shock protein 70 family.</text>
</comment>
<sequence length="633" mass="67908">MAKVVGIDLGTTNSCVAVMEGGKPTVIANAEGFRTTPSVVAFAKNGDTLVGQIAKRQAVMNPENTFYSVKRFIGRRYDEVTNEATEVSYKVLSSGGNVKVDSPGAGKQFAPEEISAKVLRKLVEDASKYLGETVTQAVITVPAYFNDSQRQATKDAGKIAGIEVMRIINEPTAASLAYGFDKKSNETILVFDLGGGTFDVSVLEVGDGVFEVLATSGDTHLGGDDFDKKIVDFLAEQFRKDEGIDLRKDKQALQRLTEAAEKAKIELSSVTQAEINLPFITATQDGPKHLDMTLTRAKFEELCADLIDRCRIPVEQALRDAKLKKENIDEVVLVGGSTRIPAVQQLVKNLLGREPNQTVNPDEVVAVGAAIQAGVLGGEVTGILLLDVTPLSLGVETLGGVMTKIIPRNTTIPTKKSEVFSTAVDGQTNVEIHVLQGEREFANDNKSLGTFRLDGIPPAPRGVPQIEVVFDIDANGILNVTAKDKGTGKEQSISITGASTLDKTDIDRMVREAEQNASSDKERREKIERKNQADSLAYQAEKQLQELGDKVPEADKTKVEGLVKDLREAVAKEDDEQIKKLTPELQQALFAVGSNIYQQAGGGAAPGAAPQDGGTTSSDGGDDVIDADFTETK</sequence>
<feature type="chain" id="PRO_0000078408" description="Chaperone protein dnaK2">
    <location>
        <begin position="1"/>
        <end position="633"/>
    </location>
</feature>
<feature type="region of interest" description="Disordered" evidence="2">
    <location>
        <begin position="513"/>
        <end position="534"/>
    </location>
</feature>
<feature type="region of interest" description="Disordered" evidence="2">
    <location>
        <begin position="598"/>
        <end position="633"/>
    </location>
</feature>
<feature type="compositionally biased region" description="Basic and acidic residues" evidence="2">
    <location>
        <begin position="513"/>
        <end position="532"/>
    </location>
</feature>
<feature type="compositionally biased region" description="Low complexity" evidence="2">
    <location>
        <begin position="606"/>
        <end position="619"/>
    </location>
</feature>
<feature type="compositionally biased region" description="Acidic residues" evidence="2">
    <location>
        <begin position="620"/>
        <end position="633"/>
    </location>
</feature>
<feature type="modified residue" description="Phosphothreonine; by autocatalysis" evidence="1">
    <location>
        <position position="197"/>
    </location>
</feature>
<name>DNAK2_NOSS1</name>
<keyword id="KW-0067">ATP-binding</keyword>
<keyword id="KW-0143">Chaperone</keyword>
<keyword id="KW-0547">Nucleotide-binding</keyword>
<keyword id="KW-0597">Phosphoprotein</keyword>
<keyword id="KW-1185">Reference proteome</keyword>
<keyword id="KW-0346">Stress response</keyword>
<gene>
    <name type="primary">dnaK2</name>
    <name type="ordered locus">alr1742</name>
</gene>